<comment type="function">
    <text evidence="1">Catalyzes the transfer of the enolpyruvyl moiety of phosphoenolpyruvate (PEP) to the 5-hydroxyl of shikimate-3-phosphate (S3P) to produce enolpyruvyl shikimate-3-phosphate and inorganic phosphate.</text>
</comment>
<comment type="catalytic activity">
    <reaction evidence="1">
        <text>3-phosphoshikimate + phosphoenolpyruvate = 5-O-(1-carboxyvinyl)-3-phosphoshikimate + phosphate</text>
        <dbReference type="Rhea" id="RHEA:21256"/>
        <dbReference type="ChEBI" id="CHEBI:43474"/>
        <dbReference type="ChEBI" id="CHEBI:57701"/>
        <dbReference type="ChEBI" id="CHEBI:58702"/>
        <dbReference type="ChEBI" id="CHEBI:145989"/>
        <dbReference type="EC" id="2.5.1.19"/>
    </reaction>
    <physiologicalReaction direction="left-to-right" evidence="1">
        <dbReference type="Rhea" id="RHEA:21257"/>
    </physiologicalReaction>
</comment>
<comment type="pathway">
    <text evidence="1">Metabolic intermediate biosynthesis; chorismate biosynthesis; chorismate from D-erythrose 4-phosphate and phosphoenolpyruvate: step 6/7.</text>
</comment>
<comment type="subunit">
    <text evidence="1">Monomer.</text>
</comment>
<comment type="subcellular location">
    <subcellularLocation>
        <location evidence="1">Cytoplasm</location>
    </subcellularLocation>
</comment>
<comment type="similarity">
    <text evidence="1">Belongs to the EPSP synthase family.</text>
</comment>
<keyword id="KW-0028">Amino-acid biosynthesis</keyword>
<keyword id="KW-0057">Aromatic amino acid biosynthesis</keyword>
<keyword id="KW-0963">Cytoplasm</keyword>
<keyword id="KW-1185">Reference proteome</keyword>
<keyword id="KW-0808">Transferase</keyword>
<evidence type="ECO:0000255" key="1">
    <source>
        <dbReference type="HAMAP-Rule" id="MF_00210"/>
    </source>
</evidence>
<accession>Q1GT16</accession>
<sequence>MTDQTATPRSFSASVPLKGRIAIPGDKSISHRSLMLSALAVGESRVAGLLEGHDVLATAAAMRAMGADIARRDDGEWRIHGVGVGGLLQPRGALDMGNSGTSTRLLMGLVASHPITATFVGDASLSGRPMGRVIDPLTQMGADISASPGARGAKTLPLMVRGLAPAIPLSYRLPMASAQVKSAILLAGLNTPGVTEVIEPVPTRDHSERMLGAFGADLTVDIDAGGTRHIRIRGEADLKPQAIIVPGDPSSAAFFIVAALIVPGSDVTIANVGLNPTRAGLVEVLKAMGGDIELLDRREIGGEPVADLRVRHSVLKGIEVDPAVAPSMIDEFPVLFVAATLAEGRTVTTGLDELRVKESDRLAVMATGLKAIGARVEESQDGLVIDGTGGDPLAGGATIAGHLDHRICMSFAIAGLVSKAPVTVDDIAPVATSFPNFEALLAGLQQ</sequence>
<gene>
    <name evidence="1" type="primary">aroA</name>
    <name type="ordered locus">Sala_1493</name>
</gene>
<reference key="1">
    <citation type="journal article" date="2009" name="Proc. Natl. Acad. Sci. U.S.A.">
        <title>The genomic basis of trophic strategy in marine bacteria.</title>
        <authorList>
            <person name="Lauro F.M."/>
            <person name="McDougald D."/>
            <person name="Thomas T."/>
            <person name="Williams T.J."/>
            <person name="Egan S."/>
            <person name="Rice S."/>
            <person name="DeMaere M.Z."/>
            <person name="Ting L."/>
            <person name="Ertan H."/>
            <person name="Johnson J."/>
            <person name="Ferriera S."/>
            <person name="Lapidus A."/>
            <person name="Anderson I."/>
            <person name="Kyrpides N."/>
            <person name="Munk A.C."/>
            <person name="Detter C."/>
            <person name="Han C.S."/>
            <person name="Brown M.V."/>
            <person name="Robb F.T."/>
            <person name="Kjelleberg S."/>
            <person name="Cavicchioli R."/>
        </authorList>
    </citation>
    <scope>NUCLEOTIDE SEQUENCE [LARGE SCALE GENOMIC DNA]</scope>
    <source>
        <strain>DSM 13593 / LMG 18877 / RB2256</strain>
    </source>
</reference>
<dbReference type="EC" id="2.5.1.19" evidence="1"/>
<dbReference type="EMBL" id="CP000356">
    <property type="protein sequence ID" value="ABF53206.1"/>
    <property type="molecule type" value="Genomic_DNA"/>
</dbReference>
<dbReference type="RefSeq" id="WP_011541786.1">
    <property type="nucleotide sequence ID" value="NC_008048.1"/>
</dbReference>
<dbReference type="SMR" id="Q1GT16"/>
<dbReference type="STRING" id="317655.Sala_1493"/>
<dbReference type="KEGG" id="sal:Sala_1493"/>
<dbReference type="eggNOG" id="COG0128">
    <property type="taxonomic scope" value="Bacteria"/>
</dbReference>
<dbReference type="HOGENOM" id="CLU_024321_0_1_5"/>
<dbReference type="OrthoDB" id="9809920at2"/>
<dbReference type="UniPathway" id="UPA00053">
    <property type="reaction ID" value="UER00089"/>
</dbReference>
<dbReference type="Proteomes" id="UP000006578">
    <property type="component" value="Chromosome"/>
</dbReference>
<dbReference type="GO" id="GO:0005737">
    <property type="term" value="C:cytoplasm"/>
    <property type="evidence" value="ECO:0007669"/>
    <property type="project" value="UniProtKB-SubCell"/>
</dbReference>
<dbReference type="GO" id="GO:0003866">
    <property type="term" value="F:3-phosphoshikimate 1-carboxyvinyltransferase activity"/>
    <property type="evidence" value="ECO:0007669"/>
    <property type="project" value="UniProtKB-UniRule"/>
</dbReference>
<dbReference type="GO" id="GO:0008652">
    <property type="term" value="P:amino acid biosynthetic process"/>
    <property type="evidence" value="ECO:0007669"/>
    <property type="project" value="UniProtKB-KW"/>
</dbReference>
<dbReference type="GO" id="GO:0009073">
    <property type="term" value="P:aromatic amino acid family biosynthetic process"/>
    <property type="evidence" value="ECO:0007669"/>
    <property type="project" value="UniProtKB-KW"/>
</dbReference>
<dbReference type="GO" id="GO:0009423">
    <property type="term" value="P:chorismate biosynthetic process"/>
    <property type="evidence" value="ECO:0007669"/>
    <property type="project" value="UniProtKB-UniRule"/>
</dbReference>
<dbReference type="CDD" id="cd01556">
    <property type="entry name" value="EPSP_synthase"/>
    <property type="match status" value="1"/>
</dbReference>
<dbReference type="FunFam" id="3.65.10.10:FF:000005">
    <property type="entry name" value="3-phosphoshikimate 1-carboxyvinyltransferase"/>
    <property type="match status" value="1"/>
</dbReference>
<dbReference type="FunFam" id="3.65.10.10:FF:000006">
    <property type="entry name" value="3-phosphoshikimate 1-carboxyvinyltransferase"/>
    <property type="match status" value="1"/>
</dbReference>
<dbReference type="Gene3D" id="3.65.10.10">
    <property type="entry name" value="Enolpyruvate transferase domain"/>
    <property type="match status" value="2"/>
</dbReference>
<dbReference type="HAMAP" id="MF_00210">
    <property type="entry name" value="EPSP_synth"/>
    <property type="match status" value="1"/>
</dbReference>
<dbReference type="InterPro" id="IPR001986">
    <property type="entry name" value="Enolpyruvate_Tfrase_dom"/>
</dbReference>
<dbReference type="InterPro" id="IPR036968">
    <property type="entry name" value="Enolpyruvate_Tfrase_sf"/>
</dbReference>
<dbReference type="InterPro" id="IPR006264">
    <property type="entry name" value="EPSP_synthase"/>
</dbReference>
<dbReference type="InterPro" id="IPR023193">
    <property type="entry name" value="EPSP_synthase_CS"/>
</dbReference>
<dbReference type="InterPro" id="IPR013792">
    <property type="entry name" value="RNA3'P_cycl/enolpyr_Trfase_a/b"/>
</dbReference>
<dbReference type="NCBIfam" id="TIGR01356">
    <property type="entry name" value="aroA"/>
    <property type="match status" value="1"/>
</dbReference>
<dbReference type="PANTHER" id="PTHR21090">
    <property type="entry name" value="AROM/DEHYDROQUINATE SYNTHASE"/>
    <property type="match status" value="1"/>
</dbReference>
<dbReference type="PANTHER" id="PTHR21090:SF5">
    <property type="entry name" value="PENTAFUNCTIONAL AROM POLYPEPTIDE"/>
    <property type="match status" value="1"/>
</dbReference>
<dbReference type="Pfam" id="PF00275">
    <property type="entry name" value="EPSP_synthase"/>
    <property type="match status" value="1"/>
</dbReference>
<dbReference type="PIRSF" id="PIRSF000505">
    <property type="entry name" value="EPSPS"/>
    <property type="match status" value="1"/>
</dbReference>
<dbReference type="SUPFAM" id="SSF55205">
    <property type="entry name" value="EPT/RTPC-like"/>
    <property type="match status" value="1"/>
</dbReference>
<dbReference type="PROSITE" id="PS00104">
    <property type="entry name" value="EPSP_SYNTHASE_1"/>
    <property type="match status" value="1"/>
</dbReference>
<dbReference type="PROSITE" id="PS00885">
    <property type="entry name" value="EPSP_SYNTHASE_2"/>
    <property type="match status" value="1"/>
</dbReference>
<proteinExistence type="inferred from homology"/>
<name>AROA_SPHAL</name>
<organism>
    <name type="scientific">Sphingopyxis alaskensis (strain DSM 13593 / LMG 18877 / RB2256)</name>
    <name type="common">Sphingomonas alaskensis</name>
    <dbReference type="NCBI Taxonomy" id="317655"/>
    <lineage>
        <taxon>Bacteria</taxon>
        <taxon>Pseudomonadati</taxon>
        <taxon>Pseudomonadota</taxon>
        <taxon>Alphaproteobacteria</taxon>
        <taxon>Sphingomonadales</taxon>
        <taxon>Sphingomonadaceae</taxon>
        <taxon>Sphingopyxis</taxon>
    </lineage>
</organism>
<feature type="chain" id="PRO_0000325382" description="3-phosphoshikimate 1-carboxyvinyltransferase">
    <location>
        <begin position="1"/>
        <end position="446"/>
    </location>
</feature>
<feature type="active site" description="Proton acceptor" evidence="1">
    <location>
        <position position="330"/>
    </location>
</feature>
<feature type="binding site" evidence="1">
    <location>
        <position position="27"/>
    </location>
    <ligand>
        <name>3-phosphoshikimate</name>
        <dbReference type="ChEBI" id="CHEBI:145989"/>
    </ligand>
</feature>
<feature type="binding site" evidence="1">
    <location>
        <position position="27"/>
    </location>
    <ligand>
        <name>phosphoenolpyruvate</name>
        <dbReference type="ChEBI" id="CHEBI:58702"/>
    </ligand>
</feature>
<feature type="binding site" evidence="1">
    <location>
        <position position="28"/>
    </location>
    <ligand>
        <name>3-phosphoshikimate</name>
        <dbReference type="ChEBI" id="CHEBI:145989"/>
    </ligand>
</feature>
<feature type="binding site" evidence="1">
    <location>
        <position position="32"/>
    </location>
    <ligand>
        <name>3-phosphoshikimate</name>
        <dbReference type="ChEBI" id="CHEBI:145989"/>
    </ligand>
</feature>
<feature type="binding site" evidence="1">
    <location>
        <position position="100"/>
    </location>
    <ligand>
        <name>phosphoenolpyruvate</name>
        <dbReference type="ChEBI" id="CHEBI:58702"/>
    </ligand>
</feature>
<feature type="binding site" evidence="1">
    <location>
        <position position="128"/>
    </location>
    <ligand>
        <name>phosphoenolpyruvate</name>
        <dbReference type="ChEBI" id="CHEBI:58702"/>
    </ligand>
</feature>
<feature type="binding site" evidence="1">
    <location>
        <position position="177"/>
    </location>
    <ligand>
        <name>3-phosphoshikimate</name>
        <dbReference type="ChEBI" id="CHEBI:145989"/>
    </ligand>
</feature>
<feature type="binding site" evidence="1">
    <location>
        <position position="179"/>
    </location>
    <ligand>
        <name>3-phosphoshikimate</name>
        <dbReference type="ChEBI" id="CHEBI:145989"/>
    </ligand>
</feature>
<feature type="binding site" evidence="1">
    <location>
        <position position="179"/>
    </location>
    <ligand>
        <name>phosphoenolpyruvate</name>
        <dbReference type="ChEBI" id="CHEBI:58702"/>
    </ligand>
</feature>
<feature type="binding site" evidence="1">
    <location>
        <position position="330"/>
    </location>
    <ligand>
        <name>3-phosphoshikimate</name>
        <dbReference type="ChEBI" id="CHEBI:145989"/>
    </ligand>
</feature>
<feature type="binding site" evidence="1">
    <location>
        <position position="357"/>
    </location>
    <ligand>
        <name>3-phosphoshikimate</name>
        <dbReference type="ChEBI" id="CHEBI:145989"/>
    </ligand>
</feature>
<feature type="binding site" evidence="1">
    <location>
        <position position="361"/>
    </location>
    <ligand>
        <name>phosphoenolpyruvate</name>
        <dbReference type="ChEBI" id="CHEBI:58702"/>
    </ligand>
</feature>
<feature type="binding site" evidence="1">
    <location>
        <position position="406"/>
    </location>
    <ligand>
        <name>phosphoenolpyruvate</name>
        <dbReference type="ChEBI" id="CHEBI:58702"/>
    </ligand>
</feature>
<protein>
    <recommendedName>
        <fullName evidence="1">3-phosphoshikimate 1-carboxyvinyltransferase</fullName>
        <ecNumber evidence="1">2.5.1.19</ecNumber>
    </recommendedName>
    <alternativeName>
        <fullName evidence="1">5-enolpyruvylshikimate-3-phosphate synthase</fullName>
        <shortName evidence="1">EPSP synthase</shortName>
        <shortName evidence="1">EPSPS</shortName>
    </alternativeName>
</protein>